<accession>B3CMP5</accession>
<name>RPOZ_WOLPP</name>
<reference key="1">
    <citation type="journal article" date="2008" name="Mol. Biol. Evol.">
        <title>Genome evolution of Wolbachia strain wPip from the Culex pipiens group.</title>
        <authorList>
            <person name="Klasson L."/>
            <person name="Walker T."/>
            <person name="Sebaihia M."/>
            <person name="Sanders M.J."/>
            <person name="Quail M.A."/>
            <person name="Lord A."/>
            <person name="Sanders S."/>
            <person name="Earl J."/>
            <person name="O'Neill S.L."/>
            <person name="Thomson N."/>
            <person name="Sinkins S.P."/>
            <person name="Parkhill J."/>
        </authorList>
    </citation>
    <scope>NUCLEOTIDE SEQUENCE [LARGE SCALE GENOMIC DNA]</scope>
    <source>
        <strain>wPip</strain>
    </source>
</reference>
<dbReference type="EC" id="2.7.7.6" evidence="1"/>
<dbReference type="EMBL" id="AM999887">
    <property type="protein sequence ID" value="CAQ55167.1"/>
    <property type="molecule type" value="Genomic_DNA"/>
</dbReference>
<dbReference type="RefSeq" id="WP_007302435.1">
    <property type="nucleotide sequence ID" value="NC_010981.1"/>
</dbReference>
<dbReference type="SMR" id="B3CMP5"/>
<dbReference type="KEGG" id="wpi:WP1059"/>
<dbReference type="eggNOG" id="COG1758">
    <property type="taxonomic scope" value="Bacteria"/>
</dbReference>
<dbReference type="HOGENOM" id="CLU_1937277_0_0_5"/>
<dbReference type="Proteomes" id="UP000008814">
    <property type="component" value="Chromosome"/>
</dbReference>
<dbReference type="GO" id="GO:0000428">
    <property type="term" value="C:DNA-directed RNA polymerase complex"/>
    <property type="evidence" value="ECO:0007669"/>
    <property type="project" value="UniProtKB-KW"/>
</dbReference>
<dbReference type="GO" id="GO:0003677">
    <property type="term" value="F:DNA binding"/>
    <property type="evidence" value="ECO:0007669"/>
    <property type="project" value="UniProtKB-UniRule"/>
</dbReference>
<dbReference type="GO" id="GO:0003899">
    <property type="term" value="F:DNA-directed RNA polymerase activity"/>
    <property type="evidence" value="ECO:0007669"/>
    <property type="project" value="UniProtKB-UniRule"/>
</dbReference>
<dbReference type="GO" id="GO:0006351">
    <property type="term" value="P:DNA-templated transcription"/>
    <property type="evidence" value="ECO:0007669"/>
    <property type="project" value="UniProtKB-UniRule"/>
</dbReference>
<dbReference type="Gene3D" id="3.90.940.10">
    <property type="match status" value="1"/>
</dbReference>
<dbReference type="HAMAP" id="MF_00366">
    <property type="entry name" value="RNApol_bact_RpoZ"/>
    <property type="match status" value="1"/>
</dbReference>
<dbReference type="InterPro" id="IPR003716">
    <property type="entry name" value="DNA-dir_RNA_pol_omega"/>
</dbReference>
<dbReference type="InterPro" id="IPR006110">
    <property type="entry name" value="Pol_omega/Rpo6/RPB6"/>
</dbReference>
<dbReference type="InterPro" id="IPR036161">
    <property type="entry name" value="RPB6/omega-like_sf"/>
</dbReference>
<dbReference type="NCBIfam" id="TIGR00690">
    <property type="entry name" value="rpoZ"/>
    <property type="match status" value="1"/>
</dbReference>
<dbReference type="PANTHER" id="PTHR34476">
    <property type="entry name" value="DNA-DIRECTED RNA POLYMERASE SUBUNIT OMEGA"/>
    <property type="match status" value="1"/>
</dbReference>
<dbReference type="PANTHER" id="PTHR34476:SF1">
    <property type="entry name" value="DNA-DIRECTED RNA POLYMERASE SUBUNIT OMEGA"/>
    <property type="match status" value="1"/>
</dbReference>
<dbReference type="Pfam" id="PF01192">
    <property type="entry name" value="RNA_pol_Rpb6"/>
    <property type="match status" value="1"/>
</dbReference>
<dbReference type="SMART" id="SM01409">
    <property type="entry name" value="RNA_pol_Rpb6"/>
    <property type="match status" value="1"/>
</dbReference>
<dbReference type="SUPFAM" id="SSF63562">
    <property type="entry name" value="RPB6/omega subunit-like"/>
    <property type="match status" value="1"/>
</dbReference>
<protein>
    <recommendedName>
        <fullName evidence="1">DNA-directed RNA polymerase subunit omega</fullName>
        <shortName evidence="1">RNAP omega subunit</shortName>
        <ecNumber evidence="1">2.7.7.6</ecNumber>
    </recommendedName>
    <alternativeName>
        <fullName evidence="1">RNA polymerase omega subunit</fullName>
    </alternativeName>
    <alternativeName>
        <fullName evidence="1">Transcriptase subunit omega</fullName>
    </alternativeName>
</protein>
<organism>
    <name type="scientific">Wolbachia pipientis subsp. Culex pipiens (strain wPip)</name>
    <dbReference type="NCBI Taxonomy" id="570417"/>
    <lineage>
        <taxon>Bacteria</taxon>
        <taxon>Pseudomonadati</taxon>
        <taxon>Pseudomonadota</taxon>
        <taxon>Alphaproteobacteria</taxon>
        <taxon>Rickettsiales</taxon>
        <taxon>Anaplasmataceae</taxon>
        <taxon>Wolbachieae</taxon>
        <taxon>Wolbachia</taxon>
    </lineage>
</organism>
<feature type="chain" id="PRO_1000121289" description="DNA-directed RNA polymerase subunit omega">
    <location>
        <begin position="1"/>
        <end position="130"/>
    </location>
</feature>
<feature type="region of interest" description="Disordered" evidence="2">
    <location>
        <begin position="107"/>
        <end position="130"/>
    </location>
</feature>
<feature type="compositionally biased region" description="Acidic residues" evidence="2">
    <location>
        <begin position="115"/>
        <end position="130"/>
    </location>
</feature>
<keyword id="KW-0240">DNA-directed RNA polymerase</keyword>
<keyword id="KW-0548">Nucleotidyltransferase</keyword>
<keyword id="KW-0804">Transcription</keyword>
<keyword id="KW-0808">Transferase</keyword>
<sequence length="130" mass="14809">MVESIVEKCVEQVHNRFKLVLLASQRTHDLSTGASDPVEMVKFKDHKDTIVSLYEIAEKKVNTHELFNLLVKRCKEHMKGNTDNTYINSPSKLANLLNFSDHQLNTSLDVSQESHDDEIDDQDSGEEVPI</sequence>
<proteinExistence type="inferred from homology"/>
<gene>
    <name evidence="1" type="primary">rpoZ</name>
    <name type="ordered locus">WP1059</name>
</gene>
<evidence type="ECO:0000255" key="1">
    <source>
        <dbReference type="HAMAP-Rule" id="MF_00366"/>
    </source>
</evidence>
<evidence type="ECO:0000256" key="2">
    <source>
        <dbReference type="SAM" id="MobiDB-lite"/>
    </source>
</evidence>
<comment type="function">
    <text evidence="1">Promotes RNA polymerase assembly. Latches the N- and C-terminal regions of the beta' subunit thereby facilitating its interaction with the beta and alpha subunits.</text>
</comment>
<comment type="catalytic activity">
    <reaction evidence="1">
        <text>RNA(n) + a ribonucleoside 5'-triphosphate = RNA(n+1) + diphosphate</text>
        <dbReference type="Rhea" id="RHEA:21248"/>
        <dbReference type="Rhea" id="RHEA-COMP:14527"/>
        <dbReference type="Rhea" id="RHEA-COMP:17342"/>
        <dbReference type="ChEBI" id="CHEBI:33019"/>
        <dbReference type="ChEBI" id="CHEBI:61557"/>
        <dbReference type="ChEBI" id="CHEBI:140395"/>
        <dbReference type="EC" id="2.7.7.6"/>
    </reaction>
</comment>
<comment type="subunit">
    <text evidence="1">The RNAP catalytic core consists of 2 alpha, 1 beta, 1 beta' and 1 omega subunit. When a sigma factor is associated with the core the holoenzyme is formed, which can initiate transcription.</text>
</comment>
<comment type="similarity">
    <text evidence="1">Belongs to the RNA polymerase subunit omega family.</text>
</comment>